<sequence length="1291" mass="149193">MAAETQTLNFGPEWLRALSSGGSITSPPLSPALPKYKLADYRYGREEMLALFLKDYKIPFDLLEKEFLPILQEEPLPPLALVPFTEEEQRNFSMSVNSAAVLRLTGRGGGGGTVVGAPRGRSSSRGRGRGRGECGFYQRSFDEVEGVFGRGGGREMHRSQSWEERGDRRFEKPGRKDVGRPNFEESGPTSVGRKHEFIRSESENWRIFREEQNGEDEDGGWRLAGSRRDGERWRPHSPDGPRSTGWREHMERRRRFEFDFRDRDDERGYRRVRSGSGSIDDDRDSLPEWCLEDAEEEMGTFDSSGAFLSLKKVQKEPIPEEQEMDFRPVEEGEERSDSDSSHNEEAKEPDKTNRREGEKTDRAGAEASEEVPQTSLSSARPGTPSDHQPQEATQFERKDEPKAEQVEKAEEENRSENSLSAKVPSRGDETVPASQQPSTPLPPDTASPLLILSPPVPTPSSASRPVETAAVEAPGMSSVSTEPDDEEGLKHLEQQAEKMVAYLQDSALDDERLTSKLQEHRAKGVSIPLMHEAMQKWYYKDPQGEIQGPFNNQEMAEWFQAGYFTMSLLVKRACDESFQPLGDIMKMWGRVPFSPGPAPPPHMGELDQERLTRQQELTALYQMQHLQYQQFLIQQQYAQVLAQQQKAALSSQQQQQLALLLQQFQALKMRMSDQNIIPSVTRSVSVPDTGSIWELQPAASQPAVWEGGSVWDLPLDTTAPGPSLEQLQQLEKAKAAKLEQERREAEMRAKREEEERKRQEELRRQQEEILRRQQEEERKRREEEELARRKQEEALRRQREQEIALRRQREEEERQQQEEALRRLEERRREEEERRKQEELLRKQEEEAAKWAREEEEAQRRLEENRLRMEEEAARLRHEEEERKRKELELQRQKDLMRQRQQQQEALRRLQQQQQQQQLAQMKLPSSSTWGQQSNTATCQSQATLSLAEIQKLEEERERQLREEQRRQQRELMKALQQQQQQQQQQKLSGWGNVSKPAGTTKSLLEIQQEEARQMQKQQQQQQQQQQQHQQSNRARNSTHSNLHTSLGNSVWGSINTGPSNQWASELVSSIWSNADTKNSNMGFWDDAVKEVGPRNSTNKNKNNASLSKSVGVSNRQNKKVEEEEKLLKLFQGVNKAQDGFTQWCEQMLHALNTANNLDVPTFVSFLKEVESPYEVHDYTRAYLGDTSEAKEFAKQFLERRAKQKVNQQRQQQQQQQQQQDSVWGMNHSTLHSVFQTNQSNNQQSNFEAVQSGKKKKKQKMVRADPSLLGFSVNASSERLNMGEIETLDDY</sequence>
<keyword id="KW-0007">Acetylation</keyword>
<keyword id="KW-0025">Alternative splicing</keyword>
<keyword id="KW-1017">Isopeptide bond</keyword>
<keyword id="KW-0488">Methylation</keyword>
<keyword id="KW-0597">Phosphoprotein</keyword>
<keyword id="KW-1185">Reference proteome</keyword>
<keyword id="KW-0832">Ubl conjugation</keyword>
<accession>Q6Y7W8</accession>
<accession>Q0VGQ7</accession>
<accession>Q3UNS2</accession>
<accession>Q63ZU9</accession>
<accession>Q80TV1</accession>
<accession>Q8K0R0</accession>
<accession>Q8R0A3</accession>
<name>GGYF2_MOUSE</name>
<proteinExistence type="evidence at protein level"/>
<comment type="function">
    <text evidence="1 4 6">Key component of the 4EHP-GYF2 complex, a multiprotein complex that acts as a repressor of translation initiation (PubMed:26763119). In the 4EHP-GYF2 complex, acts as a factor that bridges EIF4E2 to ZFP36/TTP, linking translation repression with mRNA decay (PubMed:26763119). Also recruits and bridges the association of the 4EHP complex with the decapping effector protein DDX6, which is required for the ZFP36/TTP-mediated down-regulation of AU-rich mRNA (By similarity). May act cooperatively with GRB10 to regulate tyrosine kinase receptor signaling, including IGF1 and insulin receptors (PubMed:12771153). In association with EIF4E2, assists ribosome-associated quality control (RQC) by sequestering the mRNA cap, blocking ribosome initiation and decreasing the translational load on problematic messages. Part of a pathway that works in parallel to RQC-mediated degradation of the stalled nascent polypeptide. GIGYF2 and EIF4E2 work downstream and independently of ZNF598, which seems to work as a scaffold that can recruit them to faulty mRNA even if alternative recruitment mechanisms may exist (By similarity).</text>
</comment>
<comment type="subunit">
    <text evidence="1 4 6">Component of the 4EHP-GYF2 complex, at least composed of EIF4E2, GIGYF2 and ZNF598 (PubMed:26763119). Interacts (via the 4EHP-binding motif) with EIF4E2; the interaction is direct (By similarity). Interacts with ZFP36/TTP (via P-P-P-P-G repeats); the interaction is direct (PubMed:26763119). Interacts with GRB10 (PubMed:12771153). Interacts (via DDX6 motif) with DDX6 (via RecA-like domain 2) (By similarity).</text>
</comment>
<comment type="alternative products">
    <event type="alternative splicing"/>
    <isoform>
        <id>Q6Y7W8-1</id>
        <name>1</name>
        <sequence type="displayed"/>
    </isoform>
    <isoform>
        <id>Q6Y7W8-2</id>
        <name>2</name>
        <sequence type="described" ref="VSP_022247"/>
    </isoform>
</comment>
<comment type="tissue specificity">
    <text evidence="4">Expressed in heart, liver, kidney and brain as well as in testis (PubMed:12771153).</text>
</comment>
<comment type="developmental stage">
    <text evidence="5">Widely expressed in embryonic tissues, including strong expression in the central nervous system.</text>
</comment>
<comment type="disruption phenotype">
    <text evidence="5">Mice undergo normal embryonic development, but fail to feed and die within the first 2 postnatal days. Heterozygous mice survive to adulthood with no evident metabolic or growth defects. At 12-15 months of age, heterozygous mice show motor dysfunction associated with histopathologic evidence of neurodegeneration and rare intracytoplasmic Lewy body-like inclusions in spinal anterior horn motor neurons.</text>
</comment>
<comment type="similarity">
    <text evidence="9">Belongs to the GIGYF family.</text>
</comment>
<protein>
    <recommendedName>
        <fullName evidence="7">GRB10-interacting GYF protein 2</fullName>
    </recommendedName>
    <alternativeName>
        <fullName>PERQ amino acid-rich with GYF domain-containing protein 2</fullName>
    </alternativeName>
    <alternativeName>
        <fullName>Trinucleotide repeat-containing gene 15 protein</fullName>
    </alternativeName>
</protein>
<gene>
    <name evidence="7" type="primary">Gigyf2</name>
    <name type="synonym">Kiaa0642</name>
    <name type="synonym">Perq2</name>
    <name type="synonym">Tnrc15</name>
</gene>
<reference key="1">
    <citation type="journal article" date="2003" name="J. Biol. Chem.">
        <title>Two novel proteins that are linked to insulin-like growth factor (IGF-I) receptors by the Grb10 adapter and modulate IGF-I signaling.</title>
        <authorList>
            <person name="Giovannone B."/>
            <person name="Lee E."/>
            <person name="Laviola L."/>
            <person name="Giorgino F."/>
            <person name="Cleveland K.A."/>
            <person name="Smith R.J."/>
        </authorList>
    </citation>
    <scope>NUCLEOTIDE SEQUENCE [MRNA] (ISOFORM 1)</scope>
    <scope>TISSUE SPECIFICITY</scope>
    <scope>INTERACTION WITH GRB10</scope>
    <scope>FUNCTION</scope>
    <source>
        <strain>C57BL/6J</strain>
        <tissue>Liver</tissue>
    </source>
</reference>
<reference key="2">
    <citation type="journal article" date="2004" name="Genome Res.">
        <title>The status, quality, and expansion of the NIH full-length cDNA project: the Mammalian Gene Collection (MGC).</title>
        <authorList>
            <consortium name="The MGC Project Team"/>
        </authorList>
    </citation>
    <scope>NUCLEOTIDE SEQUENCE [LARGE SCALE MRNA] (ISOFORMS 1 AND 2)</scope>
    <source>
        <strain>C57BL/6J</strain>
        <strain>FVB/N</strain>
        <tissue>Brain</tissue>
        <tissue>Eye</tissue>
        <tissue>Mammary gland</tissue>
    </source>
</reference>
<reference key="3">
    <citation type="journal article" date="2005" name="Science">
        <title>The transcriptional landscape of the mammalian genome.</title>
        <authorList>
            <person name="Carninci P."/>
            <person name="Kasukawa T."/>
            <person name="Katayama S."/>
            <person name="Gough J."/>
            <person name="Frith M.C."/>
            <person name="Maeda N."/>
            <person name="Oyama R."/>
            <person name="Ravasi T."/>
            <person name="Lenhard B."/>
            <person name="Wells C."/>
            <person name="Kodzius R."/>
            <person name="Shimokawa K."/>
            <person name="Bajic V.B."/>
            <person name="Brenner S.E."/>
            <person name="Batalov S."/>
            <person name="Forrest A.R."/>
            <person name="Zavolan M."/>
            <person name="Davis M.J."/>
            <person name="Wilming L.G."/>
            <person name="Aidinis V."/>
            <person name="Allen J.E."/>
            <person name="Ambesi-Impiombato A."/>
            <person name="Apweiler R."/>
            <person name="Aturaliya R.N."/>
            <person name="Bailey T.L."/>
            <person name="Bansal M."/>
            <person name="Baxter L."/>
            <person name="Beisel K.W."/>
            <person name="Bersano T."/>
            <person name="Bono H."/>
            <person name="Chalk A.M."/>
            <person name="Chiu K.P."/>
            <person name="Choudhary V."/>
            <person name="Christoffels A."/>
            <person name="Clutterbuck D.R."/>
            <person name="Crowe M.L."/>
            <person name="Dalla E."/>
            <person name="Dalrymple B.P."/>
            <person name="de Bono B."/>
            <person name="Della Gatta G."/>
            <person name="di Bernardo D."/>
            <person name="Down T."/>
            <person name="Engstrom P."/>
            <person name="Fagiolini M."/>
            <person name="Faulkner G."/>
            <person name="Fletcher C.F."/>
            <person name="Fukushima T."/>
            <person name="Furuno M."/>
            <person name="Futaki S."/>
            <person name="Gariboldi M."/>
            <person name="Georgii-Hemming P."/>
            <person name="Gingeras T.R."/>
            <person name="Gojobori T."/>
            <person name="Green R.E."/>
            <person name="Gustincich S."/>
            <person name="Harbers M."/>
            <person name="Hayashi Y."/>
            <person name="Hensch T.K."/>
            <person name="Hirokawa N."/>
            <person name="Hill D."/>
            <person name="Huminiecki L."/>
            <person name="Iacono M."/>
            <person name="Ikeo K."/>
            <person name="Iwama A."/>
            <person name="Ishikawa T."/>
            <person name="Jakt M."/>
            <person name="Kanapin A."/>
            <person name="Katoh M."/>
            <person name="Kawasawa Y."/>
            <person name="Kelso J."/>
            <person name="Kitamura H."/>
            <person name="Kitano H."/>
            <person name="Kollias G."/>
            <person name="Krishnan S.P."/>
            <person name="Kruger A."/>
            <person name="Kummerfeld S.K."/>
            <person name="Kurochkin I.V."/>
            <person name="Lareau L.F."/>
            <person name="Lazarevic D."/>
            <person name="Lipovich L."/>
            <person name="Liu J."/>
            <person name="Liuni S."/>
            <person name="McWilliam S."/>
            <person name="Madan Babu M."/>
            <person name="Madera M."/>
            <person name="Marchionni L."/>
            <person name="Matsuda H."/>
            <person name="Matsuzawa S."/>
            <person name="Miki H."/>
            <person name="Mignone F."/>
            <person name="Miyake S."/>
            <person name="Morris K."/>
            <person name="Mottagui-Tabar S."/>
            <person name="Mulder N."/>
            <person name="Nakano N."/>
            <person name="Nakauchi H."/>
            <person name="Ng P."/>
            <person name="Nilsson R."/>
            <person name="Nishiguchi S."/>
            <person name="Nishikawa S."/>
            <person name="Nori F."/>
            <person name="Ohara O."/>
            <person name="Okazaki Y."/>
            <person name="Orlando V."/>
            <person name="Pang K.C."/>
            <person name="Pavan W.J."/>
            <person name="Pavesi G."/>
            <person name="Pesole G."/>
            <person name="Petrovsky N."/>
            <person name="Piazza S."/>
            <person name="Reed J."/>
            <person name="Reid J.F."/>
            <person name="Ring B.Z."/>
            <person name="Ringwald M."/>
            <person name="Rost B."/>
            <person name="Ruan Y."/>
            <person name="Salzberg S.L."/>
            <person name="Sandelin A."/>
            <person name="Schneider C."/>
            <person name="Schoenbach C."/>
            <person name="Sekiguchi K."/>
            <person name="Semple C.A."/>
            <person name="Seno S."/>
            <person name="Sessa L."/>
            <person name="Sheng Y."/>
            <person name="Shibata Y."/>
            <person name="Shimada H."/>
            <person name="Shimada K."/>
            <person name="Silva D."/>
            <person name="Sinclair B."/>
            <person name="Sperling S."/>
            <person name="Stupka E."/>
            <person name="Sugiura K."/>
            <person name="Sultana R."/>
            <person name="Takenaka Y."/>
            <person name="Taki K."/>
            <person name="Tammoja K."/>
            <person name="Tan S.L."/>
            <person name="Tang S."/>
            <person name="Taylor M.S."/>
            <person name="Tegner J."/>
            <person name="Teichmann S.A."/>
            <person name="Ueda H.R."/>
            <person name="van Nimwegen E."/>
            <person name="Verardo R."/>
            <person name="Wei C.L."/>
            <person name="Yagi K."/>
            <person name="Yamanishi H."/>
            <person name="Zabarovsky E."/>
            <person name="Zhu S."/>
            <person name="Zimmer A."/>
            <person name="Hide W."/>
            <person name="Bult C."/>
            <person name="Grimmond S.M."/>
            <person name="Teasdale R.D."/>
            <person name="Liu E.T."/>
            <person name="Brusic V."/>
            <person name="Quackenbush J."/>
            <person name="Wahlestedt C."/>
            <person name="Mattick J.S."/>
            <person name="Hume D.A."/>
            <person name="Kai C."/>
            <person name="Sasaki D."/>
            <person name="Tomaru Y."/>
            <person name="Fukuda S."/>
            <person name="Kanamori-Katayama M."/>
            <person name="Suzuki M."/>
            <person name="Aoki J."/>
            <person name="Arakawa T."/>
            <person name="Iida J."/>
            <person name="Imamura K."/>
            <person name="Itoh M."/>
            <person name="Kato T."/>
            <person name="Kawaji H."/>
            <person name="Kawagashira N."/>
            <person name="Kawashima T."/>
            <person name="Kojima M."/>
            <person name="Kondo S."/>
            <person name="Konno H."/>
            <person name="Nakano K."/>
            <person name="Ninomiya N."/>
            <person name="Nishio T."/>
            <person name="Okada M."/>
            <person name="Plessy C."/>
            <person name="Shibata K."/>
            <person name="Shiraki T."/>
            <person name="Suzuki S."/>
            <person name="Tagami M."/>
            <person name="Waki K."/>
            <person name="Watahiki A."/>
            <person name="Okamura-Oho Y."/>
            <person name="Suzuki H."/>
            <person name="Kawai J."/>
            <person name="Hayashizaki Y."/>
        </authorList>
    </citation>
    <scope>NUCLEOTIDE SEQUENCE [LARGE SCALE MRNA] OF 1-878 (ISOFORM 1)</scope>
    <source>
        <strain>C57BL/6J</strain>
        <tissue>Kidney</tissue>
    </source>
</reference>
<reference key="4">
    <citation type="journal article" date="2003" name="DNA Res.">
        <title>Prediction of the coding sequences of mouse homologues of KIAA gene: II. The complete nucleotide sequences of 400 mouse KIAA-homologous cDNAs identified by screening of terminal sequences of cDNA clones randomly sampled from size-fractionated libraries.</title>
        <authorList>
            <person name="Okazaki N."/>
            <person name="Kikuno R."/>
            <person name="Ohara R."/>
            <person name="Inamoto S."/>
            <person name="Aizawa H."/>
            <person name="Yuasa S."/>
            <person name="Nakajima D."/>
            <person name="Nagase T."/>
            <person name="Ohara O."/>
            <person name="Koga H."/>
        </authorList>
    </citation>
    <scope>NUCLEOTIDE SEQUENCE [LARGE SCALE MRNA] OF 244-1291 (ISOFORM 1)</scope>
    <source>
        <tissue>Brain</tissue>
    </source>
</reference>
<reference key="5">
    <citation type="journal article" date="2009" name="Hum. Mol. Genet.">
        <title>GIGYF2 gene disruption in mice results in neurodegeneration and altered insulin-like growth factor signaling.</title>
        <authorList>
            <person name="Giovannone B."/>
            <person name="Tsiaras W.G."/>
            <person name="de la Monte S."/>
            <person name="Klysik J."/>
            <person name="Lautier C."/>
            <person name="Karashchuk G."/>
            <person name="Goldwurm S."/>
            <person name="Smith R.J."/>
        </authorList>
    </citation>
    <scope>DISRUPTION PHENOTYPE</scope>
    <scope>DEVELOPMENTAL STAGE</scope>
</reference>
<reference key="6">
    <citation type="journal article" date="2009" name="Immunity">
        <title>The phagosomal proteome in interferon-gamma-activated macrophages.</title>
        <authorList>
            <person name="Trost M."/>
            <person name="English L."/>
            <person name="Lemieux S."/>
            <person name="Courcelles M."/>
            <person name="Desjardins M."/>
            <person name="Thibault P."/>
        </authorList>
    </citation>
    <scope>IDENTIFICATION BY MASS SPECTROMETRY [LARGE SCALE ANALYSIS]</scope>
</reference>
<reference key="7">
    <citation type="journal article" date="2010" name="Cell">
        <title>A tissue-specific atlas of mouse protein phosphorylation and expression.</title>
        <authorList>
            <person name="Huttlin E.L."/>
            <person name="Jedrychowski M.P."/>
            <person name="Elias J.E."/>
            <person name="Goswami T."/>
            <person name="Rad R."/>
            <person name="Beausoleil S.A."/>
            <person name="Villen J."/>
            <person name="Haas W."/>
            <person name="Sowa M.E."/>
            <person name="Gygi S.P."/>
        </authorList>
    </citation>
    <scope>PHOSPHORYLATION [LARGE SCALE ANALYSIS] AT SER-26; SER-30 AND THR-383</scope>
    <scope>IDENTIFICATION BY MASS SPECTROMETRY [LARGE SCALE ANALYSIS]</scope>
    <source>
        <tissue>Brain</tissue>
        <tissue>Brown adipose tissue</tissue>
        <tissue>Heart</tissue>
        <tissue>Kidney</tissue>
        <tissue>Liver</tissue>
        <tissue>Lung</tissue>
        <tissue>Pancreas</tissue>
        <tissue>Spleen</tissue>
        <tissue>Testis</tissue>
    </source>
</reference>
<reference key="8">
    <citation type="journal article" date="2014" name="Mol. Cell. Proteomics">
        <title>Immunoaffinity enrichment and mass spectrometry analysis of protein methylation.</title>
        <authorList>
            <person name="Guo A."/>
            <person name="Gu H."/>
            <person name="Zhou J."/>
            <person name="Mulhern D."/>
            <person name="Wang Y."/>
            <person name="Lee K.A."/>
            <person name="Yang V."/>
            <person name="Aguiar M."/>
            <person name="Kornhauser J."/>
            <person name="Jia X."/>
            <person name="Ren J."/>
            <person name="Beausoleil S.A."/>
            <person name="Silva J.C."/>
            <person name="Vemulapalli V."/>
            <person name="Bedford M.T."/>
            <person name="Comb M.J."/>
        </authorList>
    </citation>
    <scope>METHYLATION [LARGE SCALE ANALYSIS] AT ARG-107; ARG-119; ARG-121 AND ARG-150</scope>
    <scope>IDENTIFICATION BY MASS SPECTROMETRY [LARGE SCALE ANALYSIS]</scope>
    <source>
        <tissue>Brain</tissue>
        <tissue>Embryo</tissue>
    </source>
</reference>
<reference key="9">
    <citation type="journal article" date="2016" name="RNA">
        <title>Recruitment of the 4EHP-GYF2 cap-binding complex to tetraproline motifs of tristetraprolin promotes repression and degradation of mRNAs with AU-rich elements.</title>
        <authorList>
            <person name="Fu R."/>
            <person name="Olsen M.T."/>
            <person name="Webb K."/>
            <person name="Bennett E.J."/>
            <person name="Lykke-Andersen J."/>
        </authorList>
    </citation>
    <scope>FUNCTION</scope>
    <scope>INTERACTION WITH ZFP36</scope>
</reference>
<organism>
    <name type="scientific">Mus musculus</name>
    <name type="common">Mouse</name>
    <dbReference type="NCBI Taxonomy" id="10090"/>
    <lineage>
        <taxon>Eukaryota</taxon>
        <taxon>Metazoa</taxon>
        <taxon>Chordata</taxon>
        <taxon>Craniata</taxon>
        <taxon>Vertebrata</taxon>
        <taxon>Euteleostomi</taxon>
        <taxon>Mammalia</taxon>
        <taxon>Eutheria</taxon>
        <taxon>Euarchontoglires</taxon>
        <taxon>Glires</taxon>
        <taxon>Rodentia</taxon>
        <taxon>Myomorpha</taxon>
        <taxon>Muroidea</taxon>
        <taxon>Muridae</taxon>
        <taxon>Murinae</taxon>
        <taxon>Mus</taxon>
        <taxon>Mus</taxon>
    </lineage>
</organism>
<feature type="initiator methionine" description="Removed" evidence="1">
    <location>
        <position position="1"/>
    </location>
</feature>
<feature type="chain" id="PRO_0000270838" description="GRB10-interacting GYF protein 2">
    <location>
        <begin position="2"/>
        <end position="1291"/>
    </location>
</feature>
<feature type="domain" description="GYF" evidence="2">
    <location>
        <begin position="534"/>
        <end position="582"/>
    </location>
</feature>
<feature type="region of interest" description="Disordered" evidence="3">
    <location>
        <begin position="112"/>
        <end position="132"/>
    </location>
</feature>
<feature type="region of interest" description="Disordered" evidence="3">
    <location>
        <begin position="148"/>
        <end position="196"/>
    </location>
</feature>
<feature type="region of interest" description="Disordered" evidence="3">
    <location>
        <begin position="209"/>
        <end position="248"/>
    </location>
</feature>
<feature type="region of interest" description="Disordered" evidence="3">
    <location>
        <begin position="267"/>
        <end position="484"/>
    </location>
</feature>
<feature type="region of interest" description="Required for GRB10-binding" evidence="4">
    <location>
        <begin position="548"/>
        <end position="564"/>
    </location>
</feature>
<feature type="region of interest" description="Disordered" evidence="3">
    <location>
        <begin position="732"/>
        <end position="794"/>
    </location>
</feature>
<feature type="region of interest" description="Disordered" evidence="3">
    <location>
        <begin position="846"/>
        <end position="937"/>
    </location>
</feature>
<feature type="region of interest" description="Disordered" evidence="3">
    <location>
        <begin position="958"/>
        <end position="998"/>
    </location>
</feature>
<feature type="region of interest" description="Disordered" evidence="3">
    <location>
        <begin position="1011"/>
        <end position="1053"/>
    </location>
</feature>
<feature type="region of interest" description="Disordered" evidence="3">
    <location>
        <begin position="1090"/>
        <end position="1118"/>
    </location>
</feature>
<feature type="region of interest" description="Disordered" evidence="3">
    <location>
        <begin position="1202"/>
        <end position="1223"/>
    </location>
</feature>
<feature type="region of interest" description="Disordered" evidence="3">
    <location>
        <begin position="1239"/>
        <end position="1263"/>
    </location>
</feature>
<feature type="short sequence motif" description="DDX6 binding motif" evidence="1">
    <location>
        <begin position="281"/>
        <end position="311"/>
    </location>
</feature>
<feature type="compositionally biased region" description="Basic and acidic residues" evidence="3">
    <location>
        <begin position="152"/>
        <end position="183"/>
    </location>
</feature>
<feature type="compositionally biased region" description="Basic and acidic residues" evidence="3">
    <location>
        <begin position="226"/>
        <end position="248"/>
    </location>
</feature>
<feature type="compositionally biased region" description="Acidic residues" evidence="3">
    <location>
        <begin position="290"/>
        <end position="299"/>
    </location>
</feature>
<feature type="compositionally biased region" description="Basic and acidic residues" evidence="3">
    <location>
        <begin position="313"/>
        <end position="364"/>
    </location>
</feature>
<feature type="compositionally biased region" description="Polar residues" evidence="3">
    <location>
        <begin position="371"/>
        <end position="393"/>
    </location>
</feature>
<feature type="compositionally biased region" description="Basic and acidic residues" evidence="3">
    <location>
        <begin position="394"/>
        <end position="415"/>
    </location>
</feature>
<feature type="compositionally biased region" description="Basic and acidic residues" evidence="3">
    <location>
        <begin position="846"/>
        <end position="898"/>
    </location>
</feature>
<feature type="compositionally biased region" description="Low complexity" evidence="3">
    <location>
        <begin position="899"/>
        <end position="924"/>
    </location>
</feature>
<feature type="compositionally biased region" description="Polar residues" evidence="3">
    <location>
        <begin position="925"/>
        <end position="937"/>
    </location>
</feature>
<feature type="compositionally biased region" description="Basic and acidic residues" evidence="3">
    <location>
        <begin position="958"/>
        <end position="973"/>
    </location>
</feature>
<feature type="compositionally biased region" description="Low complexity" evidence="3">
    <location>
        <begin position="977"/>
        <end position="986"/>
    </location>
</feature>
<feature type="compositionally biased region" description="Low complexity" evidence="3">
    <location>
        <begin position="1015"/>
        <end position="1031"/>
    </location>
</feature>
<feature type="compositionally biased region" description="Polar residues" evidence="3">
    <location>
        <begin position="1032"/>
        <end position="1053"/>
    </location>
</feature>
<feature type="compositionally biased region" description="Low complexity" evidence="3">
    <location>
        <begin position="1096"/>
        <end position="1110"/>
    </location>
</feature>
<feature type="compositionally biased region" description="Low complexity" evidence="3">
    <location>
        <begin position="1208"/>
        <end position="1220"/>
    </location>
</feature>
<feature type="modified residue" description="N-acetylalanine" evidence="1">
    <location>
        <position position="2"/>
    </location>
</feature>
<feature type="modified residue" description="Phosphoserine" evidence="1">
    <location>
        <position position="19"/>
    </location>
</feature>
<feature type="modified residue" description="Phosphoserine" evidence="10">
    <location>
        <position position="26"/>
    </location>
</feature>
<feature type="modified residue" description="Phosphoserine" evidence="10">
    <location>
        <position position="30"/>
    </location>
</feature>
<feature type="modified residue" description="Omega-N-methylarginine" evidence="11">
    <location>
        <position position="107"/>
    </location>
</feature>
<feature type="modified residue" description="Omega-N-methylarginine" evidence="11">
    <location>
        <position position="119"/>
    </location>
</feature>
<feature type="modified residue" description="Omega-N-methylarginine" evidence="11">
    <location>
        <position position="121"/>
    </location>
</feature>
<feature type="modified residue" description="Phosphoserine" evidence="1">
    <location>
        <position position="140"/>
    </location>
</feature>
<feature type="modified residue" description="Omega-N-methylarginine" evidence="11">
    <location>
        <position position="150"/>
    </location>
</feature>
<feature type="modified residue" description="Phosphoserine" evidence="1">
    <location>
        <position position="161"/>
    </location>
</feature>
<feature type="modified residue" description="Phosphoserine" evidence="1">
    <location>
        <position position="190"/>
    </location>
</feature>
<feature type="modified residue" description="Phosphoserine" evidence="1">
    <location>
        <position position="237"/>
    </location>
</feature>
<feature type="modified residue" description="Phosphothreonine" evidence="10">
    <location>
        <position position="383"/>
    </location>
</feature>
<feature type="modified residue" description="Phosphoserine" evidence="1">
    <location>
        <position position="594"/>
    </location>
</feature>
<feature type="modified residue" description="Phosphoserine" evidence="1">
    <location>
        <position position="995"/>
    </location>
</feature>
<feature type="modified residue" description="Phosphoserine" evidence="1">
    <location>
        <position position="1276"/>
    </location>
</feature>
<feature type="cross-link" description="Glycyl lysine isopeptide (Lys-Gly) (interchain with G-Cter in SUMO2)" evidence="1">
    <location>
        <position position="1129"/>
    </location>
</feature>
<feature type="splice variant" id="VSP_022247" description="In isoform 2." evidence="8">
    <location>
        <begin position="1"/>
        <end position="868"/>
    </location>
</feature>
<feature type="sequence conflict" description="In Ref. 3; BAE25675." evidence="9" ref="3">
    <original>E</original>
    <variation>G</variation>
    <location>
        <position position="13"/>
    </location>
</feature>
<feature type="sequence conflict" description="In Ref. 4; BAC65619." evidence="9" ref="4">
    <original>P</original>
    <variation>S</variation>
    <location>
        <position position="549"/>
    </location>
</feature>
<dbReference type="EMBL" id="AY176043">
    <property type="protein sequence ID" value="AAO46887.1"/>
    <property type="molecule type" value="mRNA"/>
</dbReference>
<dbReference type="EMBL" id="BC027137">
    <property type="protein sequence ID" value="AAH27137.1"/>
    <property type="molecule type" value="mRNA"/>
</dbReference>
<dbReference type="EMBL" id="BC030845">
    <property type="protein sequence ID" value="AAH30845.1"/>
    <property type="molecule type" value="mRNA"/>
</dbReference>
<dbReference type="EMBL" id="BC082811">
    <property type="protein sequence ID" value="AAH82811.1"/>
    <property type="molecule type" value="mRNA"/>
</dbReference>
<dbReference type="EMBL" id="BC089036">
    <property type="protein sequence ID" value="AAH89036.1"/>
    <property type="molecule type" value="mRNA"/>
</dbReference>
<dbReference type="EMBL" id="AK144058">
    <property type="protein sequence ID" value="BAE25675.1"/>
    <property type="molecule type" value="mRNA"/>
</dbReference>
<dbReference type="EMBL" id="AK122337">
    <property type="protein sequence ID" value="BAC65619.1"/>
    <property type="molecule type" value="mRNA"/>
</dbReference>
<dbReference type="CCDS" id="CCDS15133.1">
    <molecule id="Q6Y7W8-1"/>
</dbReference>
<dbReference type="RefSeq" id="NP_001103682.1">
    <property type="nucleotide sequence ID" value="NM_001110212.2"/>
</dbReference>
<dbReference type="RefSeq" id="NP_666224.3">
    <molecule id="Q6Y7W8-1"/>
    <property type="nucleotide sequence ID" value="NM_146112.4"/>
</dbReference>
<dbReference type="RefSeq" id="XP_006529527.1">
    <molecule id="Q6Y7W8-1"/>
    <property type="nucleotide sequence ID" value="XM_006529464.4"/>
</dbReference>
<dbReference type="RefSeq" id="XP_006529528.1">
    <molecule id="Q6Y7W8-1"/>
    <property type="nucleotide sequence ID" value="XM_006529465.5"/>
</dbReference>
<dbReference type="SMR" id="Q6Y7W8"/>
<dbReference type="BioGRID" id="230615">
    <property type="interactions" value="19"/>
</dbReference>
<dbReference type="FunCoup" id="Q6Y7W8">
    <property type="interactions" value="3550"/>
</dbReference>
<dbReference type="IntAct" id="Q6Y7W8">
    <property type="interactions" value="3"/>
</dbReference>
<dbReference type="MINT" id="Q6Y7W8"/>
<dbReference type="STRING" id="10090.ENSMUSP00000027475"/>
<dbReference type="GlyGen" id="Q6Y7W8">
    <property type="glycosylation" value="6 sites, 1 O-linked glycan (4 sites)"/>
</dbReference>
<dbReference type="iPTMnet" id="Q6Y7W8"/>
<dbReference type="PhosphoSitePlus" id="Q6Y7W8"/>
<dbReference type="SwissPalm" id="Q6Y7W8"/>
<dbReference type="jPOST" id="Q6Y7W8"/>
<dbReference type="PaxDb" id="10090-ENSMUSP00000027475"/>
<dbReference type="PeptideAtlas" id="Q6Y7W8"/>
<dbReference type="ProteomicsDB" id="267443">
    <molecule id="Q6Y7W8-1"/>
</dbReference>
<dbReference type="ProteomicsDB" id="267444">
    <molecule id="Q6Y7W8-2"/>
</dbReference>
<dbReference type="Pumba" id="Q6Y7W8"/>
<dbReference type="Antibodypedia" id="62944">
    <property type="antibodies" value="87 antibodies from 25 providers"/>
</dbReference>
<dbReference type="DNASU" id="227331"/>
<dbReference type="Ensembl" id="ENSMUST00000027475.15">
    <molecule id="Q6Y7W8-1"/>
    <property type="protein sequence ID" value="ENSMUSP00000027475.9"/>
    <property type="gene ID" value="ENSMUSG00000048000.16"/>
</dbReference>
<dbReference type="Ensembl" id="ENSMUST00000174501.8">
    <molecule id="Q6Y7W8-1"/>
    <property type="protein sequence ID" value="ENSMUSP00000133327.2"/>
    <property type="gene ID" value="ENSMUSG00000048000.16"/>
</dbReference>
<dbReference type="GeneID" id="227331"/>
<dbReference type="KEGG" id="mmu:227331"/>
<dbReference type="UCSC" id="uc007bwt.2">
    <molecule id="Q6Y7W8-1"/>
    <property type="organism name" value="mouse"/>
</dbReference>
<dbReference type="AGR" id="MGI:2138584"/>
<dbReference type="CTD" id="26058"/>
<dbReference type="MGI" id="MGI:2138584">
    <property type="gene designation" value="Gigyf2"/>
</dbReference>
<dbReference type="VEuPathDB" id="HostDB:ENSMUSG00000048000"/>
<dbReference type="eggNOG" id="KOG1862">
    <property type="taxonomic scope" value="Eukaryota"/>
</dbReference>
<dbReference type="GeneTree" id="ENSGT00940000156108"/>
<dbReference type="HOGENOM" id="CLU_007300_0_0_1"/>
<dbReference type="InParanoid" id="Q6Y7W8"/>
<dbReference type="OMA" id="QNRICLQ"/>
<dbReference type="OrthoDB" id="48509at2759"/>
<dbReference type="PhylomeDB" id="Q6Y7W8"/>
<dbReference type="TreeFam" id="TF325513"/>
<dbReference type="BioGRID-ORCS" id="227331">
    <property type="hits" value="13 hits in 80 CRISPR screens"/>
</dbReference>
<dbReference type="ChiTaRS" id="Gigyf2">
    <property type="organism name" value="mouse"/>
</dbReference>
<dbReference type="PRO" id="PR:Q6Y7W8"/>
<dbReference type="Proteomes" id="UP000000589">
    <property type="component" value="Chromosome 1"/>
</dbReference>
<dbReference type="RNAct" id="Q6Y7W8">
    <property type="molecule type" value="protein"/>
</dbReference>
<dbReference type="Bgee" id="ENSMUSG00000048000">
    <property type="expression patterns" value="Expressed in animal zygote and 249 other cell types or tissues"/>
</dbReference>
<dbReference type="ExpressionAtlas" id="Q6Y7W8">
    <property type="expression patterns" value="baseline and differential"/>
</dbReference>
<dbReference type="GO" id="GO:0005737">
    <property type="term" value="C:cytoplasm"/>
    <property type="evidence" value="ECO:0000314"/>
    <property type="project" value="ParkinsonsUK-UCL"/>
</dbReference>
<dbReference type="GO" id="GO:0010494">
    <property type="term" value="C:cytoplasmic stress granule"/>
    <property type="evidence" value="ECO:0007669"/>
    <property type="project" value="Ensembl"/>
</dbReference>
<dbReference type="GO" id="GO:0005829">
    <property type="term" value="C:cytosol"/>
    <property type="evidence" value="ECO:0007669"/>
    <property type="project" value="Ensembl"/>
</dbReference>
<dbReference type="GO" id="GO:0005783">
    <property type="term" value="C:endoplasmic reticulum"/>
    <property type="evidence" value="ECO:0007669"/>
    <property type="project" value="Ensembl"/>
</dbReference>
<dbReference type="GO" id="GO:0005768">
    <property type="term" value="C:endosome"/>
    <property type="evidence" value="ECO:0007669"/>
    <property type="project" value="Ensembl"/>
</dbReference>
<dbReference type="GO" id="GO:0005794">
    <property type="term" value="C:Golgi apparatus"/>
    <property type="evidence" value="ECO:0007669"/>
    <property type="project" value="Ensembl"/>
</dbReference>
<dbReference type="GO" id="GO:0016020">
    <property type="term" value="C:membrane"/>
    <property type="evidence" value="ECO:0000314"/>
    <property type="project" value="ParkinsonsUK-UCL"/>
</dbReference>
<dbReference type="GO" id="GO:0043204">
    <property type="term" value="C:perikaryon"/>
    <property type="evidence" value="ECO:0000314"/>
    <property type="project" value="ParkinsonsUK-UCL"/>
</dbReference>
<dbReference type="GO" id="GO:0032991">
    <property type="term" value="C:protein-containing complex"/>
    <property type="evidence" value="ECO:0007669"/>
    <property type="project" value="Ensembl"/>
</dbReference>
<dbReference type="GO" id="GO:1990635">
    <property type="term" value="C:proximal dendrite"/>
    <property type="evidence" value="ECO:0000314"/>
    <property type="project" value="ParkinsonsUK-UCL"/>
</dbReference>
<dbReference type="GO" id="GO:0031982">
    <property type="term" value="C:vesicle"/>
    <property type="evidence" value="ECO:0000314"/>
    <property type="project" value="ParkinsonsUK-UCL"/>
</dbReference>
<dbReference type="GO" id="GO:0060090">
    <property type="term" value="F:molecular adaptor activity"/>
    <property type="evidence" value="ECO:0007669"/>
    <property type="project" value="Ensembl"/>
</dbReference>
<dbReference type="GO" id="GO:0070064">
    <property type="term" value="F:proline-rich region binding"/>
    <property type="evidence" value="ECO:0007669"/>
    <property type="project" value="Ensembl"/>
</dbReference>
<dbReference type="GO" id="GO:0008344">
    <property type="term" value="P:adult locomotory behavior"/>
    <property type="evidence" value="ECO:0000315"/>
    <property type="project" value="MGI"/>
</dbReference>
<dbReference type="GO" id="GO:0007631">
    <property type="term" value="P:feeding behavior"/>
    <property type="evidence" value="ECO:0000315"/>
    <property type="project" value="MGI"/>
</dbReference>
<dbReference type="GO" id="GO:0048873">
    <property type="term" value="P:homeostasis of number of cells within a tissue"/>
    <property type="evidence" value="ECO:0000315"/>
    <property type="project" value="MGI"/>
</dbReference>
<dbReference type="GO" id="GO:0048009">
    <property type="term" value="P:insulin-like growth factor receptor signaling pathway"/>
    <property type="evidence" value="ECO:0000315"/>
    <property type="project" value="MGI"/>
</dbReference>
<dbReference type="GO" id="GO:0031571">
    <property type="term" value="P:mitotic G1 DNA damage checkpoint signaling"/>
    <property type="evidence" value="ECO:0000315"/>
    <property type="project" value="MGI"/>
</dbReference>
<dbReference type="GO" id="GO:0061157">
    <property type="term" value="P:mRNA destabilization"/>
    <property type="evidence" value="ECO:0007669"/>
    <property type="project" value="Ensembl"/>
</dbReference>
<dbReference type="GO" id="GO:0035264">
    <property type="term" value="P:multicellular organism growth"/>
    <property type="evidence" value="ECO:0000315"/>
    <property type="project" value="MGI"/>
</dbReference>
<dbReference type="GO" id="GO:0050881">
    <property type="term" value="P:musculoskeletal movement"/>
    <property type="evidence" value="ECO:0000315"/>
    <property type="project" value="MGI"/>
</dbReference>
<dbReference type="GO" id="GO:0017148">
    <property type="term" value="P:negative regulation of translation"/>
    <property type="evidence" value="ECO:0000266"/>
    <property type="project" value="MGI"/>
</dbReference>
<dbReference type="GO" id="GO:0045947">
    <property type="term" value="P:negative regulation of translational initiation"/>
    <property type="evidence" value="ECO:0007669"/>
    <property type="project" value="Ensembl"/>
</dbReference>
<dbReference type="GO" id="GO:0060339">
    <property type="term" value="P:negative regulation of type I interferon-mediated signaling pathway"/>
    <property type="evidence" value="ECO:0007669"/>
    <property type="project" value="Ensembl"/>
</dbReference>
<dbReference type="GO" id="GO:0050885">
    <property type="term" value="P:neuromuscular process controlling balance"/>
    <property type="evidence" value="ECO:0000315"/>
    <property type="project" value="MGI"/>
</dbReference>
<dbReference type="GO" id="GO:0009791">
    <property type="term" value="P:post-embryonic development"/>
    <property type="evidence" value="ECO:0000315"/>
    <property type="project" value="MGI"/>
</dbReference>
<dbReference type="GO" id="GO:0016441">
    <property type="term" value="P:post-transcriptional gene silencing"/>
    <property type="evidence" value="ECO:0007669"/>
    <property type="project" value="Ensembl"/>
</dbReference>
<dbReference type="GO" id="GO:0072344">
    <property type="term" value="P:rescue of stalled ribosome"/>
    <property type="evidence" value="ECO:0007669"/>
    <property type="project" value="Ensembl"/>
</dbReference>
<dbReference type="GO" id="GO:0021522">
    <property type="term" value="P:spinal cord motor neuron differentiation"/>
    <property type="evidence" value="ECO:0000315"/>
    <property type="project" value="MGI"/>
</dbReference>
<dbReference type="CDD" id="cd00072">
    <property type="entry name" value="GYF"/>
    <property type="match status" value="1"/>
</dbReference>
<dbReference type="FunFam" id="3.30.1490.40:FF:000001">
    <property type="entry name" value="GRB10-interacting GYF protein 2 isoform X1"/>
    <property type="match status" value="1"/>
</dbReference>
<dbReference type="Gene3D" id="3.30.1490.40">
    <property type="match status" value="1"/>
</dbReference>
<dbReference type="InterPro" id="IPR051640">
    <property type="entry name" value="GRB10-interact_GYF"/>
</dbReference>
<dbReference type="InterPro" id="IPR003169">
    <property type="entry name" value="GYF"/>
</dbReference>
<dbReference type="InterPro" id="IPR035445">
    <property type="entry name" value="GYF-like_dom_sf"/>
</dbReference>
<dbReference type="PANTHER" id="PTHR14445">
    <property type="entry name" value="GRB10 INTERACTING GYF PROTEIN"/>
    <property type="match status" value="1"/>
</dbReference>
<dbReference type="PANTHER" id="PTHR14445:SF38">
    <property type="entry name" value="GRB10-INTERACTING GYF PROTEIN 2"/>
    <property type="match status" value="1"/>
</dbReference>
<dbReference type="Pfam" id="PF02213">
    <property type="entry name" value="GYF"/>
    <property type="match status" value="1"/>
</dbReference>
<dbReference type="SMART" id="SM00444">
    <property type="entry name" value="GYF"/>
    <property type="match status" value="1"/>
</dbReference>
<dbReference type="SUPFAM" id="SSF55277">
    <property type="entry name" value="GYF domain"/>
    <property type="match status" value="1"/>
</dbReference>
<dbReference type="PROSITE" id="PS50829">
    <property type="entry name" value="GYF"/>
    <property type="match status" value="1"/>
</dbReference>
<evidence type="ECO:0000250" key="1">
    <source>
        <dbReference type="UniProtKB" id="Q6Y7W6"/>
    </source>
</evidence>
<evidence type="ECO:0000255" key="2">
    <source>
        <dbReference type="PROSITE-ProRule" id="PRU00101"/>
    </source>
</evidence>
<evidence type="ECO:0000256" key="3">
    <source>
        <dbReference type="SAM" id="MobiDB-lite"/>
    </source>
</evidence>
<evidence type="ECO:0000269" key="4">
    <source>
    </source>
</evidence>
<evidence type="ECO:0000269" key="5">
    <source>
    </source>
</evidence>
<evidence type="ECO:0000269" key="6">
    <source>
    </source>
</evidence>
<evidence type="ECO:0000303" key="7">
    <source>
    </source>
</evidence>
<evidence type="ECO:0000303" key="8">
    <source>
    </source>
</evidence>
<evidence type="ECO:0000305" key="9"/>
<evidence type="ECO:0007744" key="10">
    <source>
    </source>
</evidence>
<evidence type="ECO:0007744" key="11">
    <source>
    </source>
</evidence>